<proteinExistence type="inferred from homology"/>
<sequence length="589" mass="66582">MATRTHASNELSETLQGEKVVLKGWVQRRRDLGGLIFIDLRDRTGITQVVFSPDVAEAHALADKVRSEYVIEIEGTVILRTEDQINPNVPNGKIEVEATRLVVINTAKTTPFQIEDRTDVSEDLRLKYRYLDLRRPVMFDTFKMRSDVTRTIRNFLQNEGFLEVETPILTKSTPEGARDYLVPSRVHEGEFYALPQSPQLFKQLLMVAGFEKYFQIARCFRDEDLRADRQPEFTQVDIETSFLTQEEVLEMNERLIQAVMKEVKGIDIPAPFQRMKYQEAMDRYGSDKPDVRFGLELVALNDVFEGCGFKVFADTVAQGKQVKSINIKGAADKYSRKDMDELTKFVGIYGAKGLAWLKVTEEGLNGPIAKFFDEALAAALIERMGAEVGDILVFVADKASVVAASLGALRTKLGQDLDLIDESQFAFLWITDWPLFEYSEEDGRYYAAHHPFTRPFDEDIPLMDTDPSAVRAQAYDIVLNGYELGGGSLRIYERDLQEKMFELLGFSEEEAQAQFGFLLEAFEYGVPPHAGLAFGLDRFVMLLAGRHNLRDTIAFPKTASASCLMTEAPSEVSPEQLSELSLAIKPFRK</sequence>
<gene>
    <name evidence="1" type="primary">aspS</name>
    <name type="ordered locus">Bsph_3901</name>
</gene>
<name>SYD_LYSSC</name>
<protein>
    <recommendedName>
        <fullName evidence="1">Aspartate--tRNA ligase</fullName>
        <ecNumber evidence="1">6.1.1.12</ecNumber>
    </recommendedName>
    <alternativeName>
        <fullName evidence="1">Aspartyl-tRNA synthetase</fullName>
        <shortName evidence="1">AspRS</shortName>
    </alternativeName>
</protein>
<keyword id="KW-0030">Aminoacyl-tRNA synthetase</keyword>
<keyword id="KW-0067">ATP-binding</keyword>
<keyword id="KW-0963">Cytoplasm</keyword>
<keyword id="KW-0436">Ligase</keyword>
<keyword id="KW-0547">Nucleotide-binding</keyword>
<keyword id="KW-0648">Protein biosynthesis</keyword>
<comment type="function">
    <text evidence="1">Catalyzes the attachment of L-aspartate to tRNA(Asp) in a two-step reaction: L-aspartate is first activated by ATP to form Asp-AMP and then transferred to the acceptor end of tRNA(Asp).</text>
</comment>
<comment type="catalytic activity">
    <reaction evidence="1">
        <text>tRNA(Asp) + L-aspartate + ATP = L-aspartyl-tRNA(Asp) + AMP + diphosphate</text>
        <dbReference type="Rhea" id="RHEA:19649"/>
        <dbReference type="Rhea" id="RHEA-COMP:9660"/>
        <dbReference type="Rhea" id="RHEA-COMP:9678"/>
        <dbReference type="ChEBI" id="CHEBI:29991"/>
        <dbReference type="ChEBI" id="CHEBI:30616"/>
        <dbReference type="ChEBI" id="CHEBI:33019"/>
        <dbReference type="ChEBI" id="CHEBI:78442"/>
        <dbReference type="ChEBI" id="CHEBI:78516"/>
        <dbReference type="ChEBI" id="CHEBI:456215"/>
        <dbReference type="EC" id="6.1.1.12"/>
    </reaction>
</comment>
<comment type="subunit">
    <text evidence="1">Homodimer.</text>
</comment>
<comment type="subcellular location">
    <subcellularLocation>
        <location evidence="1">Cytoplasm</location>
    </subcellularLocation>
</comment>
<comment type="similarity">
    <text evidence="1">Belongs to the class-II aminoacyl-tRNA synthetase family. Type 1 subfamily.</text>
</comment>
<reference key="1">
    <citation type="journal article" date="2008" name="J. Bacteriol.">
        <title>Complete genome sequence of the mosquitocidal bacterium Bacillus sphaericus C3-41 and comparison with those of closely related Bacillus species.</title>
        <authorList>
            <person name="Hu X."/>
            <person name="Fan W."/>
            <person name="Han B."/>
            <person name="Liu H."/>
            <person name="Zheng D."/>
            <person name="Li Q."/>
            <person name="Dong W."/>
            <person name="Yan J."/>
            <person name="Gao M."/>
            <person name="Berry C."/>
            <person name="Yuan Z."/>
        </authorList>
    </citation>
    <scope>NUCLEOTIDE SEQUENCE [LARGE SCALE GENOMIC DNA]</scope>
    <source>
        <strain>C3-41</strain>
    </source>
</reference>
<feature type="chain" id="PRO_1000091011" description="Aspartate--tRNA ligase">
    <location>
        <begin position="1"/>
        <end position="589"/>
    </location>
</feature>
<feature type="region of interest" description="Aspartate" evidence="1">
    <location>
        <begin position="199"/>
        <end position="202"/>
    </location>
</feature>
<feature type="binding site" evidence="1">
    <location>
        <position position="175"/>
    </location>
    <ligand>
        <name>L-aspartate</name>
        <dbReference type="ChEBI" id="CHEBI:29991"/>
    </ligand>
</feature>
<feature type="binding site" evidence="1">
    <location>
        <begin position="221"/>
        <end position="223"/>
    </location>
    <ligand>
        <name>ATP</name>
        <dbReference type="ChEBI" id="CHEBI:30616"/>
    </ligand>
</feature>
<feature type="binding site" evidence="1">
    <location>
        <position position="221"/>
    </location>
    <ligand>
        <name>L-aspartate</name>
        <dbReference type="ChEBI" id="CHEBI:29991"/>
    </ligand>
</feature>
<feature type="binding site" evidence="1">
    <location>
        <position position="230"/>
    </location>
    <ligand>
        <name>ATP</name>
        <dbReference type="ChEBI" id="CHEBI:30616"/>
    </ligand>
</feature>
<feature type="binding site" evidence="1">
    <location>
        <position position="449"/>
    </location>
    <ligand>
        <name>L-aspartate</name>
        <dbReference type="ChEBI" id="CHEBI:29991"/>
    </ligand>
</feature>
<feature type="binding site" evidence="1">
    <location>
        <position position="483"/>
    </location>
    <ligand>
        <name>ATP</name>
        <dbReference type="ChEBI" id="CHEBI:30616"/>
    </ligand>
</feature>
<feature type="binding site" evidence="1">
    <location>
        <position position="490"/>
    </location>
    <ligand>
        <name>L-aspartate</name>
        <dbReference type="ChEBI" id="CHEBI:29991"/>
    </ligand>
</feature>
<feature type="binding site" evidence="1">
    <location>
        <begin position="535"/>
        <end position="538"/>
    </location>
    <ligand>
        <name>ATP</name>
        <dbReference type="ChEBI" id="CHEBI:30616"/>
    </ligand>
</feature>
<evidence type="ECO:0000255" key="1">
    <source>
        <dbReference type="HAMAP-Rule" id="MF_00044"/>
    </source>
</evidence>
<accession>B1HV71</accession>
<organism>
    <name type="scientific">Lysinibacillus sphaericus (strain C3-41)</name>
    <dbReference type="NCBI Taxonomy" id="444177"/>
    <lineage>
        <taxon>Bacteria</taxon>
        <taxon>Bacillati</taxon>
        <taxon>Bacillota</taxon>
        <taxon>Bacilli</taxon>
        <taxon>Bacillales</taxon>
        <taxon>Bacillaceae</taxon>
        <taxon>Lysinibacillus</taxon>
    </lineage>
</organism>
<dbReference type="EC" id="6.1.1.12" evidence="1"/>
<dbReference type="EMBL" id="CP000817">
    <property type="protein sequence ID" value="ACA41373.1"/>
    <property type="molecule type" value="Genomic_DNA"/>
</dbReference>
<dbReference type="RefSeq" id="WP_012295418.1">
    <property type="nucleotide sequence ID" value="NC_010382.1"/>
</dbReference>
<dbReference type="SMR" id="B1HV71"/>
<dbReference type="EnsemblBacteria" id="ACA41373">
    <property type="protein sequence ID" value="ACA41373"/>
    <property type="gene ID" value="Bsph_3901"/>
</dbReference>
<dbReference type="KEGG" id="lsp:Bsph_3901"/>
<dbReference type="HOGENOM" id="CLU_014330_3_2_9"/>
<dbReference type="Proteomes" id="UP000002164">
    <property type="component" value="Chromosome"/>
</dbReference>
<dbReference type="GO" id="GO:0005737">
    <property type="term" value="C:cytoplasm"/>
    <property type="evidence" value="ECO:0007669"/>
    <property type="project" value="UniProtKB-SubCell"/>
</dbReference>
<dbReference type="GO" id="GO:0004815">
    <property type="term" value="F:aspartate-tRNA ligase activity"/>
    <property type="evidence" value="ECO:0007669"/>
    <property type="project" value="UniProtKB-UniRule"/>
</dbReference>
<dbReference type="GO" id="GO:0005524">
    <property type="term" value="F:ATP binding"/>
    <property type="evidence" value="ECO:0007669"/>
    <property type="project" value="UniProtKB-UniRule"/>
</dbReference>
<dbReference type="GO" id="GO:0140096">
    <property type="term" value="F:catalytic activity, acting on a protein"/>
    <property type="evidence" value="ECO:0007669"/>
    <property type="project" value="UniProtKB-ARBA"/>
</dbReference>
<dbReference type="GO" id="GO:0003676">
    <property type="term" value="F:nucleic acid binding"/>
    <property type="evidence" value="ECO:0007669"/>
    <property type="project" value="InterPro"/>
</dbReference>
<dbReference type="GO" id="GO:0016740">
    <property type="term" value="F:transferase activity"/>
    <property type="evidence" value="ECO:0007669"/>
    <property type="project" value="UniProtKB-ARBA"/>
</dbReference>
<dbReference type="GO" id="GO:0006422">
    <property type="term" value="P:aspartyl-tRNA aminoacylation"/>
    <property type="evidence" value="ECO:0007669"/>
    <property type="project" value="UniProtKB-UniRule"/>
</dbReference>
<dbReference type="CDD" id="cd00777">
    <property type="entry name" value="AspRS_core"/>
    <property type="match status" value="1"/>
</dbReference>
<dbReference type="CDD" id="cd04317">
    <property type="entry name" value="EcAspRS_like_N"/>
    <property type="match status" value="1"/>
</dbReference>
<dbReference type="Gene3D" id="3.30.930.10">
    <property type="entry name" value="Bira Bifunctional Protein, Domain 2"/>
    <property type="match status" value="1"/>
</dbReference>
<dbReference type="Gene3D" id="3.30.1360.30">
    <property type="entry name" value="GAD-like domain"/>
    <property type="match status" value="1"/>
</dbReference>
<dbReference type="Gene3D" id="2.40.50.140">
    <property type="entry name" value="Nucleic acid-binding proteins"/>
    <property type="match status" value="1"/>
</dbReference>
<dbReference type="HAMAP" id="MF_00044">
    <property type="entry name" value="Asp_tRNA_synth_type1"/>
    <property type="match status" value="1"/>
</dbReference>
<dbReference type="InterPro" id="IPR004364">
    <property type="entry name" value="Aa-tRNA-synt_II"/>
</dbReference>
<dbReference type="InterPro" id="IPR006195">
    <property type="entry name" value="aa-tRNA-synth_II"/>
</dbReference>
<dbReference type="InterPro" id="IPR045864">
    <property type="entry name" value="aa-tRNA-synth_II/BPL/LPL"/>
</dbReference>
<dbReference type="InterPro" id="IPR004524">
    <property type="entry name" value="Asp-tRNA-ligase_1"/>
</dbReference>
<dbReference type="InterPro" id="IPR047089">
    <property type="entry name" value="Asp-tRNA-ligase_1_N"/>
</dbReference>
<dbReference type="InterPro" id="IPR002312">
    <property type="entry name" value="Asp/Asn-tRNA-synth_IIb"/>
</dbReference>
<dbReference type="InterPro" id="IPR047090">
    <property type="entry name" value="AspRS_core"/>
</dbReference>
<dbReference type="InterPro" id="IPR004115">
    <property type="entry name" value="GAD-like_sf"/>
</dbReference>
<dbReference type="InterPro" id="IPR029351">
    <property type="entry name" value="GAD_dom"/>
</dbReference>
<dbReference type="InterPro" id="IPR012340">
    <property type="entry name" value="NA-bd_OB-fold"/>
</dbReference>
<dbReference type="InterPro" id="IPR004365">
    <property type="entry name" value="NA-bd_OB_tRNA"/>
</dbReference>
<dbReference type="NCBIfam" id="TIGR00459">
    <property type="entry name" value="aspS_bact"/>
    <property type="match status" value="1"/>
</dbReference>
<dbReference type="NCBIfam" id="NF001750">
    <property type="entry name" value="PRK00476.1"/>
    <property type="match status" value="1"/>
</dbReference>
<dbReference type="PANTHER" id="PTHR22594:SF5">
    <property type="entry name" value="ASPARTATE--TRNA LIGASE, MITOCHONDRIAL"/>
    <property type="match status" value="1"/>
</dbReference>
<dbReference type="PANTHER" id="PTHR22594">
    <property type="entry name" value="ASPARTYL/LYSYL-TRNA SYNTHETASE"/>
    <property type="match status" value="1"/>
</dbReference>
<dbReference type="Pfam" id="PF02938">
    <property type="entry name" value="GAD"/>
    <property type="match status" value="1"/>
</dbReference>
<dbReference type="Pfam" id="PF00152">
    <property type="entry name" value="tRNA-synt_2"/>
    <property type="match status" value="1"/>
</dbReference>
<dbReference type="Pfam" id="PF01336">
    <property type="entry name" value="tRNA_anti-codon"/>
    <property type="match status" value="1"/>
</dbReference>
<dbReference type="PRINTS" id="PR01042">
    <property type="entry name" value="TRNASYNTHASP"/>
</dbReference>
<dbReference type="SUPFAM" id="SSF55681">
    <property type="entry name" value="Class II aaRS and biotin synthetases"/>
    <property type="match status" value="1"/>
</dbReference>
<dbReference type="SUPFAM" id="SSF55261">
    <property type="entry name" value="GAD domain-like"/>
    <property type="match status" value="1"/>
</dbReference>
<dbReference type="SUPFAM" id="SSF50249">
    <property type="entry name" value="Nucleic acid-binding proteins"/>
    <property type="match status" value="1"/>
</dbReference>
<dbReference type="PROSITE" id="PS50862">
    <property type="entry name" value="AA_TRNA_LIGASE_II"/>
    <property type="match status" value="1"/>
</dbReference>